<organism>
    <name type="scientific">Bacillus anthracis (strain A0248)</name>
    <dbReference type="NCBI Taxonomy" id="592021"/>
    <lineage>
        <taxon>Bacteria</taxon>
        <taxon>Bacillati</taxon>
        <taxon>Bacillota</taxon>
        <taxon>Bacilli</taxon>
        <taxon>Bacillales</taxon>
        <taxon>Bacillaceae</taxon>
        <taxon>Bacillus</taxon>
        <taxon>Bacillus cereus group</taxon>
    </lineage>
</organism>
<keyword id="KW-0004">4Fe-4S</keyword>
<keyword id="KW-0963">Cytoplasm</keyword>
<keyword id="KW-0408">Iron</keyword>
<keyword id="KW-0411">Iron-sulfur</keyword>
<keyword id="KW-0479">Metal-binding</keyword>
<keyword id="KW-0662">Pyridine nucleotide biosynthesis</keyword>
<keyword id="KW-0808">Transferase</keyword>
<name>NADA_BACAA</name>
<feature type="chain" id="PRO_1000146820" description="Quinolinate synthase">
    <location>
        <begin position="1"/>
        <end position="368"/>
    </location>
</feature>
<feature type="binding site" evidence="1">
    <location>
        <position position="46"/>
    </location>
    <ligand>
        <name>iminosuccinate</name>
        <dbReference type="ChEBI" id="CHEBI:77875"/>
    </ligand>
</feature>
<feature type="binding site" evidence="1">
    <location>
        <position position="63"/>
    </location>
    <ligand>
        <name>iminosuccinate</name>
        <dbReference type="ChEBI" id="CHEBI:77875"/>
    </ligand>
</feature>
<feature type="binding site" evidence="1">
    <location>
        <position position="110"/>
    </location>
    <ligand>
        <name>[4Fe-4S] cluster</name>
        <dbReference type="ChEBI" id="CHEBI:49883"/>
    </ligand>
</feature>
<feature type="binding site" evidence="1">
    <location>
        <begin position="141"/>
        <end position="143"/>
    </location>
    <ligand>
        <name>iminosuccinate</name>
        <dbReference type="ChEBI" id="CHEBI:77875"/>
    </ligand>
</feature>
<feature type="binding site" evidence="1">
    <location>
        <position position="162"/>
    </location>
    <ligand>
        <name>iminosuccinate</name>
        <dbReference type="ChEBI" id="CHEBI:77875"/>
    </ligand>
</feature>
<feature type="binding site" evidence="1">
    <location>
        <position position="230"/>
    </location>
    <ligand>
        <name>[4Fe-4S] cluster</name>
        <dbReference type="ChEBI" id="CHEBI:49883"/>
    </ligand>
</feature>
<feature type="binding site" evidence="1">
    <location>
        <begin position="256"/>
        <end position="258"/>
    </location>
    <ligand>
        <name>iminosuccinate</name>
        <dbReference type="ChEBI" id="CHEBI:77875"/>
    </ligand>
</feature>
<feature type="binding site" evidence="1">
    <location>
        <position position="273"/>
    </location>
    <ligand>
        <name>iminosuccinate</name>
        <dbReference type="ChEBI" id="CHEBI:77875"/>
    </ligand>
</feature>
<feature type="binding site" evidence="1">
    <location>
        <position position="320"/>
    </location>
    <ligand>
        <name>[4Fe-4S] cluster</name>
        <dbReference type="ChEBI" id="CHEBI:49883"/>
    </ligand>
</feature>
<accession>C3P9B5</accession>
<gene>
    <name evidence="1" type="primary">nadA</name>
    <name type="ordered locus">BAA_4677</name>
</gene>
<sequence length="368" mass="41626">MSILEKVQPIETMLPERYYTMSTEDMEKRVREIKEKMGETLFIPGHHYQKDEVVQFSDAAGDSLQLAQVAASNKEAKYIVFCGVHFMAETADMLTTDEQVVILPDMRAGCSMADMADIEQTERAWEELTKLFGDTMIPLTYVNSTAAIKAFCGRNGGATVTSSNAKQMVSWAFTQKERLVFLPDQHLGRNTAYDLGIPLDKMAVWDPHTDSLEYDGDIEEIQVILWKGHCSVHQNFTVKNIENVRKNHPDMNIIVHPECCYEVVAASDYAGSTKYIIDMIESAPSGSKWAIGTEMNLVNRIIQQHPDKEIVSLNPFMCPCLTMNRIDLPHLLWALETIERGEEINVISVDKQVTEEAVLALNRMLERV</sequence>
<protein>
    <recommendedName>
        <fullName evidence="1">Quinolinate synthase</fullName>
        <ecNumber evidence="1">2.5.1.72</ecNumber>
    </recommendedName>
</protein>
<proteinExistence type="inferred from homology"/>
<dbReference type="EC" id="2.5.1.72" evidence="1"/>
<dbReference type="EMBL" id="CP001598">
    <property type="protein sequence ID" value="ACQ48702.1"/>
    <property type="molecule type" value="Genomic_DNA"/>
</dbReference>
<dbReference type="RefSeq" id="WP_000025290.1">
    <property type="nucleotide sequence ID" value="NC_012659.1"/>
</dbReference>
<dbReference type="SMR" id="C3P9B5"/>
<dbReference type="GeneID" id="45024301"/>
<dbReference type="KEGG" id="bai:BAA_4677"/>
<dbReference type="HOGENOM" id="CLU_047382_2_0_9"/>
<dbReference type="UniPathway" id="UPA00253">
    <property type="reaction ID" value="UER00327"/>
</dbReference>
<dbReference type="GO" id="GO:0005829">
    <property type="term" value="C:cytosol"/>
    <property type="evidence" value="ECO:0007669"/>
    <property type="project" value="TreeGrafter"/>
</dbReference>
<dbReference type="GO" id="GO:0051539">
    <property type="term" value="F:4 iron, 4 sulfur cluster binding"/>
    <property type="evidence" value="ECO:0007669"/>
    <property type="project" value="UniProtKB-KW"/>
</dbReference>
<dbReference type="GO" id="GO:0046872">
    <property type="term" value="F:metal ion binding"/>
    <property type="evidence" value="ECO:0007669"/>
    <property type="project" value="UniProtKB-KW"/>
</dbReference>
<dbReference type="GO" id="GO:0008987">
    <property type="term" value="F:quinolinate synthetase A activity"/>
    <property type="evidence" value="ECO:0007669"/>
    <property type="project" value="UniProtKB-UniRule"/>
</dbReference>
<dbReference type="GO" id="GO:0034628">
    <property type="term" value="P:'de novo' NAD biosynthetic process from L-aspartate"/>
    <property type="evidence" value="ECO:0007669"/>
    <property type="project" value="TreeGrafter"/>
</dbReference>
<dbReference type="FunFam" id="3.40.50.10800:FF:000001">
    <property type="entry name" value="Quinolinate synthase A"/>
    <property type="match status" value="1"/>
</dbReference>
<dbReference type="Gene3D" id="3.40.50.10800">
    <property type="entry name" value="NadA-like"/>
    <property type="match status" value="3"/>
</dbReference>
<dbReference type="HAMAP" id="MF_00569">
    <property type="entry name" value="NadA_type3"/>
    <property type="match status" value="1"/>
</dbReference>
<dbReference type="InterPro" id="IPR003473">
    <property type="entry name" value="NadA"/>
</dbReference>
<dbReference type="InterPro" id="IPR036094">
    <property type="entry name" value="NadA_sf"/>
</dbReference>
<dbReference type="InterPro" id="IPR023515">
    <property type="entry name" value="Quinolinate_synth_A_type3"/>
</dbReference>
<dbReference type="NCBIfam" id="TIGR00550">
    <property type="entry name" value="nadA"/>
    <property type="match status" value="1"/>
</dbReference>
<dbReference type="NCBIfam" id="NF006880">
    <property type="entry name" value="PRK09375.2-1"/>
    <property type="match status" value="1"/>
</dbReference>
<dbReference type="NCBIfam" id="NF006883">
    <property type="entry name" value="PRK09375.2-4"/>
    <property type="match status" value="1"/>
</dbReference>
<dbReference type="PANTHER" id="PTHR30573:SF0">
    <property type="entry name" value="QUINOLINATE SYNTHASE, CHLOROPLASTIC"/>
    <property type="match status" value="1"/>
</dbReference>
<dbReference type="PANTHER" id="PTHR30573">
    <property type="entry name" value="QUINOLINATE SYNTHETASE A"/>
    <property type="match status" value="1"/>
</dbReference>
<dbReference type="Pfam" id="PF02445">
    <property type="entry name" value="NadA"/>
    <property type="match status" value="1"/>
</dbReference>
<dbReference type="SUPFAM" id="SSF142754">
    <property type="entry name" value="NadA-like"/>
    <property type="match status" value="1"/>
</dbReference>
<reference key="1">
    <citation type="submission" date="2009-04" db="EMBL/GenBank/DDBJ databases">
        <title>Genome sequence of Bacillus anthracis A0248.</title>
        <authorList>
            <person name="Dodson R.J."/>
            <person name="Munk A.C."/>
            <person name="Bruce D."/>
            <person name="Detter C."/>
            <person name="Tapia R."/>
            <person name="Sutton G."/>
            <person name="Sims D."/>
            <person name="Brettin T."/>
        </authorList>
    </citation>
    <scope>NUCLEOTIDE SEQUENCE [LARGE SCALE GENOMIC DNA]</scope>
    <source>
        <strain>A0248</strain>
    </source>
</reference>
<comment type="function">
    <text evidence="1">Catalyzes the condensation of iminoaspartate with dihydroxyacetone phosphate to form quinolinate.</text>
</comment>
<comment type="catalytic activity">
    <reaction evidence="1">
        <text>iminosuccinate + dihydroxyacetone phosphate = quinolinate + phosphate + 2 H2O + H(+)</text>
        <dbReference type="Rhea" id="RHEA:25888"/>
        <dbReference type="ChEBI" id="CHEBI:15377"/>
        <dbReference type="ChEBI" id="CHEBI:15378"/>
        <dbReference type="ChEBI" id="CHEBI:29959"/>
        <dbReference type="ChEBI" id="CHEBI:43474"/>
        <dbReference type="ChEBI" id="CHEBI:57642"/>
        <dbReference type="ChEBI" id="CHEBI:77875"/>
        <dbReference type="EC" id="2.5.1.72"/>
    </reaction>
    <physiologicalReaction direction="left-to-right" evidence="1">
        <dbReference type="Rhea" id="RHEA:25889"/>
    </physiologicalReaction>
</comment>
<comment type="cofactor">
    <cofactor evidence="1">
        <name>[4Fe-4S] cluster</name>
        <dbReference type="ChEBI" id="CHEBI:49883"/>
    </cofactor>
    <text evidence="1">Binds 1 [4Fe-4S] cluster per subunit.</text>
</comment>
<comment type="pathway">
    <text evidence="1">Cofactor biosynthesis; NAD(+) biosynthesis; quinolinate from iminoaspartate: step 1/1.</text>
</comment>
<comment type="subcellular location">
    <subcellularLocation>
        <location evidence="1">Cytoplasm</location>
    </subcellularLocation>
</comment>
<comment type="similarity">
    <text evidence="1">Belongs to the quinolinate synthase family. Type 3 subfamily.</text>
</comment>
<evidence type="ECO:0000255" key="1">
    <source>
        <dbReference type="HAMAP-Rule" id="MF_00569"/>
    </source>
</evidence>